<organism>
    <name type="scientific">Arabidopsis thaliana</name>
    <name type="common">Mouse-ear cress</name>
    <dbReference type="NCBI Taxonomy" id="3702"/>
    <lineage>
        <taxon>Eukaryota</taxon>
        <taxon>Viridiplantae</taxon>
        <taxon>Streptophyta</taxon>
        <taxon>Embryophyta</taxon>
        <taxon>Tracheophyta</taxon>
        <taxon>Spermatophyta</taxon>
        <taxon>Magnoliopsida</taxon>
        <taxon>eudicotyledons</taxon>
        <taxon>Gunneridae</taxon>
        <taxon>Pentapetalae</taxon>
        <taxon>rosids</taxon>
        <taxon>malvids</taxon>
        <taxon>Brassicales</taxon>
        <taxon>Brassicaceae</taxon>
        <taxon>Camelineae</taxon>
        <taxon>Arabidopsis</taxon>
    </lineage>
</organism>
<feature type="signal peptide" evidence="1">
    <location>
        <begin position="1"/>
        <end position="24"/>
    </location>
</feature>
<feature type="chain" id="PRO_0000253865" description="Fasciclin-like arabinogalactan protein 5">
    <location>
        <begin position="25"/>
        <end position="255"/>
    </location>
</feature>
<feature type="propeptide" id="PRO_0000253866" description="Removed in mature form" evidence="1">
    <location>
        <begin position="256"/>
        <end position="278"/>
    </location>
</feature>
<feature type="domain" description="FAS1" evidence="2">
    <location>
        <begin position="25"/>
        <end position="169"/>
    </location>
</feature>
<feature type="region of interest" description="Disordered" evidence="3">
    <location>
        <begin position="199"/>
        <end position="257"/>
    </location>
</feature>
<feature type="compositionally biased region" description="Low complexity" evidence="3">
    <location>
        <begin position="224"/>
        <end position="239"/>
    </location>
</feature>
<feature type="compositionally biased region" description="Basic and acidic residues" evidence="3">
    <location>
        <begin position="240"/>
        <end position="251"/>
    </location>
</feature>
<feature type="lipid moiety-binding region" description="GPI-anchor amidated serine" evidence="1">
    <location>
        <position position="255"/>
    </location>
</feature>
<feature type="glycosylation site" description="N-linked (GlcNAc...) asparagine" evidence="1">
    <location>
        <position position="26"/>
    </location>
</feature>
<feature type="glycosylation site" description="N-linked (GlcNAc...) asparagine" evidence="1">
    <location>
        <position position="74"/>
    </location>
</feature>
<feature type="glycosylation site" description="N-linked (GlcNAc...) asparagine" evidence="1">
    <location>
        <position position="126"/>
    </location>
</feature>
<feature type="glycosylation site" description="N-linked (GlcNAc...) asparagine" evidence="1">
    <location>
        <position position="159"/>
    </location>
</feature>
<reference key="1">
    <citation type="journal article" date="1999" name="Nature">
        <title>Sequence and analysis of chromosome 4 of the plant Arabidopsis thaliana.</title>
        <authorList>
            <person name="Mayer K.F.X."/>
            <person name="Schueller C."/>
            <person name="Wambutt R."/>
            <person name="Murphy G."/>
            <person name="Volckaert G."/>
            <person name="Pohl T."/>
            <person name="Duesterhoeft A."/>
            <person name="Stiekema W."/>
            <person name="Entian K.-D."/>
            <person name="Terryn N."/>
            <person name="Harris B."/>
            <person name="Ansorge W."/>
            <person name="Brandt P."/>
            <person name="Grivell L.A."/>
            <person name="Rieger M."/>
            <person name="Weichselgartner M."/>
            <person name="de Simone V."/>
            <person name="Obermaier B."/>
            <person name="Mache R."/>
            <person name="Mueller M."/>
            <person name="Kreis M."/>
            <person name="Delseny M."/>
            <person name="Puigdomenech P."/>
            <person name="Watson M."/>
            <person name="Schmidtheini T."/>
            <person name="Reichert B."/>
            <person name="Portetelle D."/>
            <person name="Perez-Alonso M."/>
            <person name="Boutry M."/>
            <person name="Bancroft I."/>
            <person name="Vos P."/>
            <person name="Hoheisel J."/>
            <person name="Zimmermann W."/>
            <person name="Wedler H."/>
            <person name="Ridley P."/>
            <person name="Langham S.-A."/>
            <person name="McCullagh B."/>
            <person name="Bilham L."/>
            <person name="Robben J."/>
            <person name="van der Schueren J."/>
            <person name="Grymonprez B."/>
            <person name="Chuang Y.-J."/>
            <person name="Vandenbussche F."/>
            <person name="Braeken M."/>
            <person name="Weltjens I."/>
            <person name="Voet M."/>
            <person name="Bastiaens I."/>
            <person name="Aert R."/>
            <person name="Defoor E."/>
            <person name="Weitzenegger T."/>
            <person name="Bothe G."/>
            <person name="Ramsperger U."/>
            <person name="Hilbert H."/>
            <person name="Braun M."/>
            <person name="Holzer E."/>
            <person name="Brandt A."/>
            <person name="Peters S."/>
            <person name="van Staveren M."/>
            <person name="Dirkse W."/>
            <person name="Mooijman P."/>
            <person name="Klein Lankhorst R."/>
            <person name="Rose M."/>
            <person name="Hauf J."/>
            <person name="Koetter P."/>
            <person name="Berneiser S."/>
            <person name="Hempel S."/>
            <person name="Feldpausch M."/>
            <person name="Lamberth S."/>
            <person name="Van den Daele H."/>
            <person name="De Keyser A."/>
            <person name="Buysshaert C."/>
            <person name="Gielen J."/>
            <person name="Villarroel R."/>
            <person name="De Clercq R."/>
            <person name="van Montagu M."/>
            <person name="Rogers J."/>
            <person name="Cronin A."/>
            <person name="Quail M.A."/>
            <person name="Bray-Allen S."/>
            <person name="Clark L."/>
            <person name="Doggett J."/>
            <person name="Hall S."/>
            <person name="Kay M."/>
            <person name="Lennard N."/>
            <person name="McLay K."/>
            <person name="Mayes R."/>
            <person name="Pettett A."/>
            <person name="Rajandream M.A."/>
            <person name="Lyne M."/>
            <person name="Benes V."/>
            <person name="Rechmann S."/>
            <person name="Borkova D."/>
            <person name="Bloecker H."/>
            <person name="Scharfe M."/>
            <person name="Grimm M."/>
            <person name="Loehnert T.-H."/>
            <person name="Dose S."/>
            <person name="de Haan M."/>
            <person name="Maarse A.C."/>
            <person name="Schaefer M."/>
            <person name="Mueller-Auer S."/>
            <person name="Gabel C."/>
            <person name="Fuchs M."/>
            <person name="Fartmann B."/>
            <person name="Granderath K."/>
            <person name="Dauner D."/>
            <person name="Herzl A."/>
            <person name="Neumann S."/>
            <person name="Argiriou A."/>
            <person name="Vitale D."/>
            <person name="Liguori R."/>
            <person name="Piravandi E."/>
            <person name="Massenet O."/>
            <person name="Quigley F."/>
            <person name="Clabauld G."/>
            <person name="Muendlein A."/>
            <person name="Felber R."/>
            <person name="Schnabl S."/>
            <person name="Hiller R."/>
            <person name="Schmidt W."/>
            <person name="Lecharny A."/>
            <person name="Aubourg S."/>
            <person name="Chefdor F."/>
            <person name="Cooke R."/>
            <person name="Berger C."/>
            <person name="Monfort A."/>
            <person name="Casacuberta E."/>
            <person name="Gibbons T."/>
            <person name="Weber N."/>
            <person name="Vandenbol M."/>
            <person name="Bargues M."/>
            <person name="Terol J."/>
            <person name="Torres A."/>
            <person name="Perez-Perez A."/>
            <person name="Purnelle B."/>
            <person name="Bent E."/>
            <person name="Johnson S."/>
            <person name="Tacon D."/>
            <person name="Jesse T."/>
            <person name="Heijnen L."/>
            <person name="Schwarz S."/>
            <person name="Scholler P."/>
            <person name="Heber S."/>
            <person name="Francs P."/>
            <person name="Bielke C."/>
            <person name="Frishman D."/>
            <person name="Haase D."/>
            <person name="Lemcke K."/>
            <person name="Mewes H.-W."/>
            <person name="Stocker S."/>
            <person name="Zaccaria P."/>
            <person name="Bevan M."/>
            <person name="Wilson R.K."/>
            <person name="de la Bastide M."/>
            <person name="Habermann K."/>
            <person name="Parnell L."/>
            <person name="Dedhia N."/>
            <person name="Gnoj L."/>
            <person name="Schutz K."/>
            <person name="Huang E."/>
            <person name="Spiegel L."/>
            <person name="Sekhon M."/>
            <person name="Murray J."/>
            <person name="Sheet P."/>
            <person name="Cordes M."/>
            <person name="Abu-Threideh J."/>
            <person name="Stoneking T."/>
            <person name="Kalicki J."/>
            <person name="Graves T."/>
            <person name="Harmon G."/>
            <person name="Edwards J."/>
            <person name="Latreille P."/>
            <person name="Courtney L."/>
            <person name="Cloud J."/>
            <person name="Abbott A."/>
            <person name="Scott K."/>
            <person name="Johnson D."/>
            <person name="Minx P."/>
            <person name="Bentley D."/>
            <person name="Fulton B."/>
            <person name="Miller N."/>
            <person name="Greco T."/>
            <person name="Kemp K."/>
            <person name="Kramer J."/>
            <person name="Fulton L."/>
            <person name="Mardis E."/>
            <person name="Dante M."/>
            <person name="Pepin K."/>
            <person name="Hillier L.W."/>
            <person name="Nelson J."/>
            <person name="Spieth J."/>
            <person name="Ryan E."/>
            <person name="Andrews S."/>
            <person name="Geisel C."/>
            <person name="Layman D."/>
            <person name="Du H."/>
            <person name="Ali J."/>
            <person name="Berghoff A."/>
            <person name="Jones K."/>
            <person name="Drone K."/>
            <person name="Cotton M."/>
            <person name="Joshu C."/>
            <person name="Antonoiu B."/>
            <person name="Zidanic M."/>
            <person name="Strong C."/>
            <person name="Sun H."/>
            <person name="Lamar B."/>
            <person name="Yordan C."/>
            <person name="Ma P."/>
            <person name="Zhong J."/>
            <person name="Preston R."/>
            <person name="Vil D."/>
            <person name="Shekher M."/>
            <person name="Matero A."/>
            <person name="Shah R."/>
            <person name="Swaby I.K."/>
            <person name="O'Shaughnessy A."/>
            <person name="Rodriguez M."/>
            <person name="Hoffman J."/>
            <person name="Till S."/>
            <person name="Granat S."/>
            <person name="Shohdy N."/>
            <person name="Hasegawa A."/>
            <person name="Hameed A."/>
            <person name="Lodhi M."/>
            <person name="Johnson A."/>
            <person name="Chen E."/>
            <person name="Marra M.A."/>
            <person name="Martienssen R."/>
            <person name="McCombie W.R."/>
        </authorList>
    </citation>
    <scope>NUCLEOTIDE SEQUENCE [LARGE SCALE GENOMIC DNA]</scope>
    <source>
        <strain>cv. Columbia</strain>
    </source>
</reference>
<reference key="2">
    <citation type="journal article" date="2017" name="Plant J.">
        <title>Araport11: a complete reannotation of the Arabidopsis thaliana reference genome.</title>
        <authorList>
            <person name="Cheng C.Y."/>
            <person name="Krishnakumar V."/>
            <person name="Chan A.P."/>
            <person name="Thibaud-Nissen F."/>
            <person name="Schobel S."/>
            <person name="Town C.D."/>
        </authorList>
    </citation>
    <scope>GENOME REANNOTATION</scope>
    <source>
        <strain>cv. Columbia</strain>
    </source>
</reference>
<reference key="3">
    <citation type="submission" date="2006-07" db="EMBL/GenBank/DDBJ databases">
        <title>Arabidopsis ORF clones.</title>
        <authorList>
            <person name="Quinitio C."/>
            <person name="Chen H."/>
            <person name="Kim C.J."/>
            <person name="Shinn P."/>
            <person name="Ecker J.R."/>
        </authorList>
    </citation>
    <scope>NUCLEOTIDE SEQUENCE [LARGE SCALE MRNA]</scope>
    <source>
        <strain>cv. Columbia</strain>
    </source>
</reference>
<reference key="4">
    <citation type="journal article" date="2003" name="Plant Physiol.">
        <title>The fasciclin-like arabinogalactan proteins of Arabidopsis. A multigene family of putative cell adhesion molecules.</title>
        <authorList>
            <person name="Johnson K.L."/>
            <person name="Jones B.J."/>
            <person name="Bacic A."/>
            <person name="Schultz C.J."/>
        </authorList>
    </citation>
    <scope>GENE FAMILY ORGANIZATION</scope>
    <scope>NOMENCLATURE</scope>
</reference>
<dbReference type="EMBL" id="AL021633">
    <property type="protein sequence ID" value="CAA16540.1"/>
    <property type="molecule type" value="Genomic_DNA"/>
</dbReference>
<dbReference type="EMBL" id="AL080283">
    <property type="status" value="NOT_ANNOTATED_CDS"/>
    <property type="molecule type" value="Genomic_DNA"/>
</dbReference>
<dbReference type="EMBL" id="AL161578">
    <property type="protein sequence ID" value="CAB79855.1"/>
    <property type="molecule type" value="Genomic_DNA"/>
</dbReference>
<dbReference type="EMBL" id="CP002687">
    <property type="protein sequence ID" value="AEE85901.1"/>
    <property type="molecule type" value="Genomic_DNA"/>
</dbReference>
<dbReference type="EMBL" id="BT026043">
    <property type="protein sequence ID" value="ABG48399.1"/>
    <property type="molecule type" value="mRNA"/>
</dbReference>
<dbReference type="PIR" id="T04504">
    <property type="entry name" value="T04504"/>
</dbReference>
<dbReference type="RefSeq" id="NP_194865.1">
    <property type="nucleotide sequence ID" value="NM_119286.3"/>
</dbReference>
<dbReference type="SMR" id="O49586"/>
<dbReference type="BioGRID" id="14550">
    <property type="interactions" value="1"/>
</dbReference>
<dbReference type="FunCoup" id="O49586">
    <property type="interactions" value="5"/>
</dbReference>
<dbReference type="STRING" id="3702.O49586"/>
<dbReference type="GlyCosmos" id="O49586">
    <property type="glycosylation" value="4 sites, No reported glycans"/>
</dbReference>
<dbReference type="GlyGen" id="O49586">
    <property type="glycosylation" value="5 sites"/>
</dbReference>
<dbReference type="PaxDb" id="3702-AT4G31370.1"/>
<dbReference type="ProteomicsDB" id="228911"/>
<dbReference type="EnsemblPlants" id="AT4G31370.1">
    <property type="protein sequence ID" value="AT4G31370.1"/>
    <property type="gene ID" value="AT4G31370"/>
</dbReference>
<dbReference type="GeneID" id="829264"/>
<dbReference type="Gramene" id="AT4G31370.1">
    <property type="protein sequence ID" value="AT4G31370.1"/>
    <property type="gene ID" value="AT4G31370"/>
</dbReference>
<dbReference type="KEGG" id="ath:AT4G31370"/>
<dbReference type="Araport" id="AT4G31370"/>
<dbReference type="TAIR" id="AT4G31370">
    <property type="gene designation" value="FLA5"/>
</dbReference>
<dbReference type="eggNOG" id="ENOG502RZZR">
    <property type="taxonomic scope" value="Eukaryota"/>
</dbReference>
<dbReference type="HOGENOM" id="CLU_058119_0_0_1"/>
<dbReference type="InParanoid" id="O49586"/>
<dbReference type="OMA" id="RNILMTH"/>
<dbReference type="PhylomeDB" id="O49586"/>
<dbReference type="PRO" id="PR:O49586"/>
<dbReference type="Proteomes" id="UP000006548">
    <property type="component" value="Chromosome 4"/>
</dbReference>
<dbReference type="ExpressionAtlas" id="O49586">
    <property type="expression patterns" value="baseline and differential"/>
</dbReference>
<dbReference type="GO" id="GO:0005886">
    <property type="term" value="C:plasma membrane"/>
    <property type="evidence" value="ECO:0007669"/>
    <property type="project" value="UniProtKB-SubCell"/>
</dbReference>
<dbReference type="GO" id="GO:0098552">
    <property type="term" value="C:side of membrane"/>
    <property type="evidence" value="ECO:0007669"/>
    <property type="project" value="UniProtKB-KW"/>
</dbReference>
<dbReference type="FunFam" id="2.30.180.10:FF:000015">
    <property type="entry name" value="Fasciclin-like arabinogalactan protein 3"/>
    <property type="match status" value="1"/>
</dbReference>
<dbReference type="Gene3D" id="2.30.180.10">
    <property type="entry name" value="FAS1 domain"/>
    <property type="match status" value="1"/>
</dbReference>
<dbReference type="InterPro" id="IPR036378">
    <property type="entry name" value="FAS1_dom_sf"/>
</dbReference>
<dbReference type="InterPro" id="IPR000782">
    <property type="entry name" value="FAS1_domain"/>
</dbReference>
<dbReference type="InterPro" id="IPR033254">
    <property type="entry name" value="Plant_FLA"/>
</dbReference>
<dbReference type="PANTHER" id="PTHR32382">
    <property type="entry name" value="FASCICLIN-LIKE ARABINOGALACTAN PROTEIN"/>
    <property type="match status" value="1"/>
</dbReference>
<dbReference type="PANTHER" id="PTHR32382:SF89">
    <property type="entry name" value="FASCICLIN-LIKE ARABINOGALACTAN PROTEIN 5"/>
    <property type="match status" value="1"/>
</dbReference>
<dbReference type="Pfam" id="PF02469">
    <property type="entry name" value="Fasciclin"/>
    <property type="match status" value="1"/>
</dbReference>
<dbReference type="SUPFAM" id="SSF82153">
    <property type="entry name" value="FAS1 domain"/>
    <property type="match status" value="1"/>
</dbReference>
<dbReference type="PROSITE" id="PS50213">
    <property type="entry name" value="FAS1"/>
    <property type="match status" value="1"/>
</dbReference>
<name>FLA5_ARATH</name>
<accession>O49586</accession>
<sequence>MGLKASLSLLSLTILLVFSKVVTANNITLAFQKYSKFSTMRDLFIKTKLIAAIDKYQTITVLAVSNDAISSITNRSEVELRNILMTHVILDYYDELKLQGMREKSIMLTTLYQTTGLGEQMNGFLNVSKSKGRVYFGSEVKNSPLNAEYVSTVYHNPYNLSIIQITMPIVAPGLSLAIFPPPPPYVHVAPYPTPMDASVVPAPGPAADDNSPDSAVPKTPPAPATDTPEADSPAPAPSADNEKIEAADKAKPSSSASKAGWSFDVILLLAFLASFAGF</sequence>
<gene>
    <name type="primary">FLA5</name>
    <name type="ordered locus">At4g31370</name>
    <name type="ORF">F3L17.11</name>
    <name type="ORF">F8F16.190</name>
</gene>
<evidence type="ECO:0000255" key="1"/>
<evidence type="ECO:0000255" key="2">
    <source>
        <dbReference type="PROSITE-ProRule" id="PRU00082"/>
    </source>
</evidence>
<evidence type="ECO:0000256" key="3">
    <source>
        <dbReference type="SAM" id="MobiDB-lite"/>
    </source>
</evidence>
<evidence type="ECO:0000305" key="4"/>
<protein>
    <recommendedName>
        <fullName>Fasciclin-like arabinogalactan protein 5</fullName>
    </recommendedName>
</protein>
<keyword id="KW-1003">Cell membrane</keyword>
<keyword id="KW-0325">Glycoprotein</keyword>
<keyword id="KW-0336">GPI-anchor</keyword>
<keyword id="KW-0449">Lipoprotein</keyword>
<keyword id="KW-0472">Membrane</keyword>
<keyword id="KW-0654">Proteoglycan</keyword>
<keyword id="KW-1185">Reference proteome</keyword>
<keyword id="KW-0732">Signal</keyword>
<comment type="function">
    <text>May be a cell surface adhesion protein.</text>
</comment>
<comment type="subcellular location">
    <subcellularLocation>
        <location evidence="4">Cell membrane</location>
        <topology evidence="4">Lipid-anchor</topology>
        <topology evidence="4">GPI-anchor</topology>
    </subcellularLocation>
</comment>
<comment type="similarity">
    <text evidence="4">Belongs to the fasciclin-like AGP family.</text>
</comment>
<proteinExistence type="evidence at transcript level"/>